<reference key="1">
    <citation type="journal article" date="2005" name="Nucleic Acids Res.">
        <title>Genomic blueprint of Hahella chejuensis, a marine microbe producing an algicidal agent.</title>
        <authorList>
            <person name="Jeong H."/>
            <person name="Yim J.H."/>
            <person name="Lee C."/>
            <person name="Choi S.-H."/>
            <person name="Park Y.K."/>
            <person name="Yoon S.H."/>
            <person name="Hur C.-G."/>
            <person name="Kang H.-Y."/>
            <person name="Kim D."/>
            <person name="Lee H.H."/>
            <person name="Park K.H."/>
            <person name="Park S.-H."/>
            <person name="Park H.-S."/>
            <person name="Lee H.K."/>
            <person name="Oh T.K."/>
            <person name="Kim J.F."/>
        </authorList>
    </citation>
    <scope>NUCLEOTIDE SEQUENCE [LARGE SCALE GENOMIC DNA]</scope>
    <source>
        <strain>KCTC 2396</strain>
    </source>
</reference>
<evidence type="ECO:0000255" key="1">
    <source>
        <dbReference type="HAMAP-Rule" id="MF_00600"/>
    </source>
</evidence>
<feature type="chain" id="PRO_0000256917" description="Chaperonin GroEL">
    <location>
        <begin position="1"/>
        <end position="549"/>
    </location>
</feature>
<feature type="binding site" evidence="1">
    <location>
        <begin position="30"/>
        <end position="33"/>
    </location>
    <ligand>
        <name>ATP</name>
        <dbReference type="ChEBI" id="CHEBI:30616"/>
    </ligand>
</feature>
<feature type="binding site" evidence="1">
    <location>
        <position position="51"/>
    </location>
    <ligand>
        <name>ATP</name>
        <dbReference type="ChEBI" id="CHEBI:30616"/>
    </ligand>
</feature>
<feature type="binding site" evidence="1">
    <location>
        <begin position="87"/>
        <end position="91"/>
    </location>
    <ligand>
        <name>ATP</name>
        <dbReference type="ChEBI" id="CHEBI:30616"/>
    </ligand>
</feature>
<feature type="binding site" evidence="1">
    <location>
        <position position="415"/>
    </location>
    <ligand>
        <name>ATP</name>
        <dbReference type="ChEBI" id="CHEBI:30616"/>
    </ligand>
</feature>
<feature type="binding site" evidence="1">
    <location>
        <position position="495"/>
    </location>
    <ligand>
        <name>ATP</name>
        <dbReference type="ChEBI" id="CHEBI:30616"/>
    </ligand>
</feature>
<comment type="function">
    <text evidence="1">Together with its co-chaperonin GroES, plays an essential role in assisting protein folding. The GroEL-GroES system forms a nano-cage that allows encapsulation of the non-native substrate proteins and provides a physical environment optimized to promote and accelerate protein folding.</text>
</comment>
<comment type="catalytic activity">
    <reaction evidence="1">
        <text>ATP + H2O + a folded polypeptide = ADP + phosphate + an unfolded polypeptide.</text>
        <dbReference type="EC" id="5.6.1.7"/>
    </reaction>
</comment>
<comment type="subunit">
    <text evidence="1">Forms a cylinder of 14 subunits composed of two heptameric rings stacked back-to-back. Interacts with the co-chaperonin GroES.</text>
</comment>
<comment type="subcellular location">
    <subcellularLocation>
        <location evidence="1">Cytoplasm</location>
    </subcellularLocation>
</comment>
<comment type="similarity">
    <text evidence="1">Belongs to the chaperonin (HSP60) family.</text>
</comment>
<sequence>MAAKDVKFGDSARKRMVAGVNTLADAVKVTLGPKGRNVVLDKSFGAPTVTKDGVSVAKEIELKDKFENMGAQMVKEVASKTNDEAGDGTTTATVLAQAILNEGLKSVAAGMNPMDLKRGIDKAVIAAVKEIKNISRPCEDSKSIAQVGTISANSDERIGNIIAEAMEKVGKEGVITVEEGSGLEDELDVVEGMQFDRGYLSAYFVNNQDSMSAELEDPFILLVDKKISNIREMLPVLEAVAKSSKPLLVISEDLEGEALATLVVNNMRGIVKVAAVKAPGFGDRRKEMLQDIAILTGGTVISEEVGLNLEGATLDDLGTAKRVVVTKENTTIIDGAGAKSDIEARVAQIRRQIEETSSDYDREKLQERVAKLAGGVAVIKVGAATEVEMKEKKARVEDALHSTRAAVEEGVVPGGGVALVRALQAVSDLAGDNADQDVGINLLRRAMEAPLRQIVANAGGEPSVVVDKVRQGEGAFGYNAGTEAYGDMLEMGILDPAKVTRTALQSAASIAGLMITTECMVSDLPEDDKKGGMPDMGGMGGMGGMGGMM</sequence>
<accession>Q2SDG0</accession>
<organism>
    <name type="scientific">Hahella chejuensis (strain KCTC 2396)</name>
    <dbReference type="NCBI Taxonomy" id="349521"/>
    <lineage>
        <taxon>Bacteria</taxon>
        <taxon>Pseudomonadati</taxon>
        <taxon>Pseudomonadota</taxon>
        <taxon>Gammaproteobacteria</taxon>
        <taxon>Oceanospirillales</taxon>
        <taxon>Hahellaceae</taxon>
        <taxon>Hahella</taxon>
    </lineage>
</organism>
<dbReference type="EC" id="5.6.1.7" evidence="1"/>
<dbReference type="EMBL" id="CP000155">
    <property type="protein sequence ID" value="ABC31314.1"/>
    <property type="molecule type" value="Genomic_DNA"/>
</dbReference>
<dbReference type="RefSeq" id="WP_011398379.1">
    <property type="nucleotide sequence ID" value="NC_007645.1"/>
</dbReference>
<dbReference type="SMR" id="Q2SDG0"/>
<dbReference type="STRING" id="349521.HCH_04613"/>
<dbReference type="KEGG" id="hch:HCH_04613"/>
<dbReference type="eggNOG" id="COG0459">
    <property type="taxonomic scope" value="Bacteria"/>
</dbReference>
<dbReference type="HOGENOM" id="CLU_016503_3_0_6"/>
<dbReference type="OrthoDB" id="9766614at2"/>
<dbReference type="Proteomes" id="UP000000238">
    <property type="component" value="Chromosome"/>
</dbReference>
<dbReference type="GO" id="GO:0005737">
    <property type="term" value="C:cytoplasm"/>
    <property type="evidence" value="ECO:0007669"/>
    <property type="project" value="UniProtKB-SubCell"/>
</dbReference>
<dbReference type="GO" id="GO:0005524">
    <property type="term" value="F:ATP binding"/>
    <property type="evidence" value="ECO:0007669"/>
    <property type="project" value="UniProtKB-UniRule"/>
</dbReference>
<dbReference type="GO" id="GO:0140662">
    <property type="term" value="F:ATP-dependent protein folding chaperone"/>
    <property type="evidence" value="ECO:0007669"/>
    <property type="project" value="InterPro"/>
</dbReference>
<dbReference type="GO" id="GO:0016853">
    <property type="term" value="F:isomerase activity"/>
    <property type="evidence" value="ECO:0007669"/>
    <property type="project" value="UniProtKB-KW"/>
</dbReference>
<dbReference type="GO" id="GO:0051082">
    <property type="term" value="F:unfolded protein binding"/>
    <property type="evidence" value="ECO:0007669"/>
    <property type="project" value="UniProtKB-UniRule"/>
</dbReference>
<dbReference type="GO" id="GO:0042026">
    <property type="term" value="P:protein refolding"/>
    <property type="evidence" value="ECO:0007669"/>
    <property type="project" value="UniProtKB-UniRule"/>
</dbReference>
<dbReference type="CDD" id="cd03344">
    <property type="entry name" value="GroEL"/>
    <property type="match status" value="1"/>
</dbReference>
<dbReference type="FunFam" id="1.10.560.10:FF:000001">
    <property type="entry name" value="60 kDa chaperonin"/>
    <property type="match status" value="1"/>
</dbReference>
<dbReference type="FunFam" id="3.50.7.10:FF:000001">
    <property type="entry name" value="60 kDa chaperonin"/>
    <property type="match status" value="1"/>
</dbReference>
<dbReference type="Gene3D" id="3.50.7.10">
    <property type="entry name" value="GroEL"/>
    <property type="match status" value="1"/>
</dbReference>
<dbReference type="Gene3D" id="1.10.560.10">
    <property type="entry name" value="GroEL-like equatorial domain"/>
    <property type="match status" value="1"/>
</dbReference>
<dbReference type="Gene3D" id="3.30.260.10">
    <property type="entry name" value="TCP-1-like chaperonin intermediate domain"/>
    <property type="match status" value="1"/>
</dbReference>
<dbReference type="HAMAP" id="MF_00600">
    <property type="entry name" value="CH60"/>
    <property type="match status" value="1"/>
</dbReference>
<dbReference type="InterPro" id="IPR018370">
    <property type="entry name" value="Chaperonin_Cpn60_CS"/>
</dbReference>
<dbReference type="InterPro" id="IPR001844">
    <property type="entry name" value="Cpn60/GroEL"/>
</dbReference>
<dbReference type="InterPro" id="IPR002423">
    <property type="entry name" value="Cpn60/GroEL/TCP-1"/>
</dbReference>
<dbReference type="InterPro" id="IPR027409">
    <property type="entry name" value="GroEL-like_apical_dom_sf"/>
</dbReference>
<dbReference type="InterPro" id="IPR027413">
    <property type="entry name" value="GROEL-like_equatorial_sf"/>
</dbReference>
<dbReference type="InterPro" id="IPR027410">
    <property type="entry name" value="TCP-1-like_intermed_sf"/>
</dbReference>
<dbReference type="NCBIfam" id="TIGR02348">
    <property type="entry name" value="GroEL"/>
    <property type="match status" value="1"/>
</dbReference>
<dbReference type="NCBIfam" id="NF000592">
    <property type="entry name" value="PRK00013.1"/>
    <property type="match status" value="1"/>
</dbReference>
<dbReference type="NCBIfam" id="NF009487">
    <property type="entry name" value="PRK12849.1"/>
    <property type="match status" value="1"/>
</dbReference>
<dbReference type="NCBIfam" id="NF009488">
    <property type="entry name" value="PRK12850.1"/>
    <property type="match status" value="1"/>
</dbReference>
<dbReference type="NCBIfam" id="NF009489">
    <property type="entry name" value="PRK12851.1"/>
    <property type="match status" value="1"/>
</dbReference>
<dbReference type="PANTHER" id="PTHR45633">
    <property type="entry name" value="60 KDA HEAT SHOCK PROTEIN, MITOCHONDRIAL"/>
    <property type="match status" value="1"/>
</dbReference>
<dbReference type="Pfam" id="PF00118">
    <property type="entry name" value="Cpn60_TCP1"/>
    <property type="match status" value="1"/>
</dbReference>
<dbReference type="PRINTS" id="PR00298">
    <property type="entry name" value="CHAPERONIN60"/>
</dbReference>
<dbReference type="SUPFAM" id="SSF52029">
    <property type="entry name" value="GroEL apical domain-like"/>
    <property type="match status" value="1"/>
</dbReference>
<dbReference type="SUPFAM" id="SSF48592">
    <property type="entry name" value="GroEL equatorial domain-like"/>
    <property type="match status" value="1"/>
</dbReference>
<dbReference type="SUPFAM" id="SSF54849">
    <property type="entry name" value="GroEL-intermediate domain like"/>
    <property type="match status" value="1"/>
</dbReference>
<dbReference type="PROSITE" id="PS00296">
    <property type="entry name" value="CHAPERONINS_CPN60"/>
    <property type="match status" value="1"/>
</dbReference>
<proteinExistence type="inferred from homology"/>
<keyword id="KW-0067">ATP-binding</keyword>
<keyword id="KW-0143">Chaperone</keyword>
<keyword id="KW-0963">Cytoplasm</keyword>
<keyword id="KW-0413">Isomerase</keyword>
<keyword id="KW-0547">Nucleotide-binding</keyword>
<keyword id="KW-1185">Reference proteome</keyword>
<name>CH60_HAHCH</name>
<protein>
    <recommendedName>
        <fullName evidence="1">Chaperonin GroEL</fullName>
        <ecNumber evidence="1">5.6.1.7</ecNumber>
    </recommendedName>
    <alternativeName>
        <fullName evidence="1">60 kDa chaperonin</fullName>
    </alternativeName>
    <alternativeName>
        <fullName evidence="1">Chaperonin-60</fullName>
        <shortName evidence="1">Cpn60</shortName>
    </alternativeName>
</protein>
<gene>
    <name evidence="1" type="primary">groEL</name>
    <name evidence="1" type="synonym">groL</name>
    <name type="ordered locus">HCH_04613</name>
</gene>